<accession>P23212</accession>
<evidence type="ECO:0000255" key="1">
    <source>
        <dbReference type="PROSITE-ProRule" id="PRU00434"/>
    </source>
</evidence>
<evidence type="ECO:0000256" key="2">
    <source>
        <dbReference type="SAM" id="MobiDB-lite"/>
    </source>
</evidence>
<evidence type="ECO:0000305" key="3"/>
<dbReference type="EMBL" id="X52085">
    <property type="protein sequence ID" value="CAA36304.1"/>
    <property type="status" value="ALT_SEQ"/>
    <property type="molecule type" value="Genomic_DNA"/>
</dbReference>
<dbReference type="PIR" id="S11158">
    <property type="entry name" value="YESAEE"/>
</dbReference>
<dbReference type="SMR" id="P23212"/>
<dbReference type="TCDB" id="3.A.1.121.1">
    <property type="family name" value="the atp-binding cassette (abc) superfamily"/>
</dbReference>
<dbReference type="KEGG" id="ag:CAA36304"/>
<dbReference type="GO" id="GO:0005524">
    <property type="term" value="F:ATP binding"/>
    <property type="evidence" value="ECO:0007669"/>
    <property type="project" value="UniProtKB-KW"/>
</dbReference>
<dbReference type="GO" id="GO:0016887">
    <property type="term" value="F:ATP hydrolysis activity"/>
    <property type="evidence" value="ECO:0007669"/>
    <property type="project" value="InterPro"/>
</dbReference>
<dbReference type="GO" id="GO:0046677">
    <property type="term" value="P:response to antibiotic"/>
    <property type="evidence" value="ECO:0007669"/>
    <property type="project" value="UniProtKB-KW"/>
</dbReference>
<dbReference type="CDD" id="cd03221">
    <property type="entry name" value="ABCF_EF-3"/>
    <property type="match status" value="2"/>
</dbReference>
<dbReference type="Gene3D" id="3.40.50.300">
    <property type="entry name" value="P-loop containing nucleotide triphosphate hydrolases"/>
    <property type="match status" value="3"/>
</dbReference>
<dbReference type="InterPro" id="IPR003593">
    <property type="entry name" value="AAA+_ATPase"/>
</dbReference>
<dbReference type="InterPro" id="IPR003439">
    <property type="entry name" value="ABC_transporter-like_ATP-bd"/>
</dbReference>
<dbReference type="InterPro" id="IPR017871">
    <property type="entry name" value="ABC_transporter-like_CS"/>
</dbReference>
<dbReference type="InterPro" id="IPR050611">
    <property type="entry name" value="ABCF_EF3_subfamily"/>
</dbReference>
<dbReference type="InterPro" id="IPR027417">
    <property type="entry name" value="P-loop_NTPase"/>
</dbReference>
<dbReference type="InterPro" id="IPR000014">
    <property type="entry name" value="PAS"/>
</dbReference>
<dbReference type="NCBIfam" id="NF000168">
    <property type="entry name" value="ABCF_Msr_all"/>
    <property type="match status" value="1"/>
</dbReference>
<dbReference type="NCBIfam" id="NF000256">
    <property type="entry name" value="MsrSA"/>
    <property type="match status" value="1"/>
</dbReference>
<dbReference type="NCBIfam" id="NF000355">
    <property type="entry name" value="ribo_prot_ABC_F"/>
    <property type="match status" value="1"/>
</dbReference>
<dbReference type="PANTHER" id="PTHR19211">
    <property type="entry name" value="ATP-BINDING TRANSPORT PROTEIN-RELATED"/>
    <property type="match status" value="1"/>
</dbReference>
<dbReference type="PANTHER" id="PTHR19211:SF100">
    <property type="entry name" value="RIBOSOME PROTECTION PROTEIN VMLR"/>
    <property type="match status" value="1"/>
</dbReference>
<dbReference type="Pfam" id="PF00005">
    <property type="entry name" value="ABC_tran"/>
    <property type="match status" value="2"/>
</dbReference>
<dbReference type="SMART" id="SM00382">
    <property type="entry name" value="AAA"/>
    <property type="match status" value="2"/>
</dbReference>
<dbReference type="SMART" id="SM00091">
    <property type="entry name" value="PAS"/>
    <property type="match status" value="1"/>
</dbReference>
<dbReference type="SUPFAM" id="SSF52540">
    <property type="entry name" value="P-loop containing nucleoside triphosphate hydrolases"/>
    <property type="match status" value="2"/>
</dbReference>
<dbReference type="PROSITE" id="PS00211">
    <property type="entry name" value="ABC_TRANSPORTER_1"/>
    <property type="match status" value="2"/>
</dbReference>
<dbReference type="PROSITE" id="PS50893">
    <property type="entry name" value="ABC_TRANSPORTER_2"/>
    <property type="match status" value="2"/>
</dbReference>
<proteinExistence type="inferred from homology"/>
<sequence>MEQYTIKFNQINHKLTDLRSLNIDHLYAYQFEKIALIGGNGTGKTTLLNMIAQKTKPESGTVETNGEIQYFEQLNMDVENDFNTLDGSLMSELHIPMHTTDSMSGGEKAKYKLANVISNYSPILLLDEPTNHLDKIGKDYLNNILKYYYGTLIIVSHDRALIDQIADTIWDIQEDGTIRVFKGNYTQYQNQYEQEQLEQQRKYEQYISEKQRLSQASKAKRNQAQQMAQASSKQKNKSIAPDRLSASKEKGTVEKAAQKQAKHIEKRMEHLEEVEKPQSYHEFNFPQNKIYDIHNNYPIIAQNLTLVKGSQKLLTQVRFQIPYGKNIALVGANGVGKTTLLEAIYHQIEGIDCSPKVQMAYYRQLAYEDMRDVSLLQYLMDETDSSESFSRAILNNLGLNEALERSCNVLSGGERTKLSLAVLFSTKANMLILDEPTNFLDIKTLEALEMFMNKYPGIILFTSHDTRFVKHVSDKKWELTGQSIHDIT</sequence>
<feature type="chain" id="PRO_0000092614" description="Erythromycin resistance ATP-binding protein MsrA">
    <location>
        <begin position="1"/>
        <end position="488"/>
    </location>
</feature>
<feature type="domain" description="ABC transporter 1" evidence="1">
    <location>
        <begin position="6"/>
        <end position="199"/>
    </location>
</feature>
<feature type="domain" description="ABC transporter 2" evidence="1">
    <location>
        <begin position="299"/>
        <end position="487"/>
    </location>
</feature>
<feature type="region of interest" description="Q-linker, rich in Glu and hydrophilic AA">
    <location>
        <begin position="200"/>
        <end position="298"/>
    </location>
</feature>
<feature type="region of interest" description="Disordered" evidence="2">
    <location>
        <begin position="211"/>
        <end position="255"/>
    </location>
</feature>
<feature type="compositionally biased region" description="Low complexity" evidence="2">
    <location>
        <begin position="222"/>
        <end position="233"/>
    </location>
</feature>
<feature type="compositionally biased region" description="Basic and acidic residues" evidence="2">
    <location>
        <begin position="245"/>
        <end position="255"/>
    </location>
</feature>
<feature type="binding site" evidence="1">
    <location>
        <begin position="38"/>
        <end position="45"/>
    </location>
    <ligand>
        <name>ATP</name>
        <dbReference type="ChEBI" id="CHEBI:30616"/>
        <label>1</label>
    </ligand>
</feature>
<feature type="binding site" evidence="1">
    <location>
        <begin position="331"/>
        <end position="338"/>
    </location>
    <ligand>
        <name>ATP</name>
        <dbReference type="ChEBI" id="CHEBI:30616"/>
        <label>2</label>
    </ligand>
</feature>
<geneLocation type="plasmid">
    <name>pUL5050</name>
</geneLocation>
<reference key="1">
    <citation type="journal article" date="1990" name="Mol. Microbiol.">
        <title>Inducible erythromycin resistance in staphylococci is encoded by a member of the ATP-binding transport super-gene family.</title>
        <authorList>
            <person name="Ross J.I."/>
            <person name="Eady E.A."/>
            <person name="Cove J.H."/>
            <person name="Cunliffe W.J."/>
            <person name="Baumberg S."/>
            <person name="Wootton J.C."/>
        </authorList>
    </citation>
    <scope>NUCLEOTIDE SEQUENCE [GENOMIC DNA]</scope>
    <source>
        <strain>968</strain>
    </source>
</reference>
<gene>
    <name type="primary">msrA</name>
</gene>
<keyword id="KW-0046">Antibiotic resistance</keyword>
<keyword id="KW-0067">ATP-binding</keyword>
<keyword id="KW-0547">Nucleotide-binding</keyword>
<keyword id="KW-0614">Plasmid</keyword>
<keyword id="KW-0677">Repeat</keyword>
<organism>
    <name type="scientific">Staphylococcus epidermidis</name>
    <dbReference type="NCBI Taxonomy" id="1282"/>
    <lineage>
        <taxon>Bacteria</taxon>
        <taxon>Bacillati</taxon>
        <taxon>Bacillota</taxon>
        <taxon>Bacilli</taxon>
        <taxon>Bacillales</taxon>
        <taxon>Staphylococcaceae</taxon>
        <taxon>Staphylococcus</taxon>
    </lineage>
</organism>
<name>MSRA_STAEP</name>
<protein>
    <recommendedName>
        <fullName>Erythromycin resistance ATP-binding protein MsrA</fullName>
    </recommendedName>
</protein>
<comment type="function">
    <text>Confers resistance to 14-membered ring macrolides (like erythromycin) and to B streptogramins, by acting as an ATP-dependent efflux pump.</text>
</comment>
<comment type="domain">
    <text>Composed of two homologous domains.</text>
</comment>
<comment type="similarity">
    <text evidence="3">Belongs to the ABC transporter superfamily.</text>
</comment>